<organism>
    <name type="scientific">Rattus norvegicus</name>
    <name type="common">Rat</name>
    <dbReference type="NCBI Taxonomy" id="10116"/>
    <lineage>
        <taxon>Eukaryota</taxon>
        <taxon>Metazoa</taxon>
        <taxon>Chordata</taxon>
        <taxon>Craniata</taxon>
        <taxon>Vertebrata</taxon>
        <taxon>Euteleostomi</taxon>
        <taxon>Mammalia</taxon>
        <taxon>Eutheria</taxon>
        <taxon>Euarchontoglires</taxon>
        <taxon>Glires</taxon>
        <taxon>Rodentia</taxon>
        <taxon>Myomorpha</taxon>
        <taxon>Muroidea</taxon>
        <taxon>Muridae</taxon>
        <taxon>Murinae</taxon>
        <taxon>Rattus</taxon>
    </lineage>
</organism>
<dbReference type="EC" id="1.14.14.1"/>
<dbReference type="EMBL" id="J02669">
    <property type="protein sequence ID" value="AAA41030.1"/>
    <property type="molecule type" value="mRNA"/>
</dbReference>
<dbReference type="EMBL" id="M33312">
    <property type="protein sequence ID" value="AAA41020.1"/>
    <property type="molecule type" value="Genomic_DNA"/>
</dbReference>
<dbReference type="EMBL" id="BC081848">
    <property type="protein sequence ID" value="AAH81848.1"/>
    <property type="molecule type" value="mRNA"/>
</dbReference>
<dbReference type="PIR" id="A34272">
    <property type="entry name" value="A34272"/>
</dbReference>
<dbReference type="RefSeq" id="NP_036824.2">
    <property type="nucleotide sequence ID" value="NM_012692.2"/>
</dbReference>
<dbReference type="RefSeq" id="XP_008757327.1">
    <property type="nucleotide sequence ID" value="XM_008759105.1"/>
</dbReference>
<dbReference type="RefSeq" id="XP_008757328.1">
    <property type="nucleotide sequence ID" value="XM_008759106.1"/>
</dbReference>
<dbReference type="SMR" id="P11711"/>
<dbReference type="FunCoup" id="P11711">
    <property type="interactions" value="62"/>
</dbReference>
<dbReference type="IntAct" id="P11711">
    <property type="interactions" value="1"/>
</dbReference>
<dbReference type="ChEMBL" id="CHEMBL3509602"/>
<dbReference type="DrugBank" id="DB13746">
    <property type="generic name" value="Bioallethrin"/>
</dbReference>
<dbReference type="GlyGen" id="P11711">
    <property type="glycosylation" value="1 site"/>
</dbReference>
<dbReference type="iPTMnet" id="P11711"/>
<dbReference type="PhosphoSitePlus" id="P11711"/>
<dbReference type="PaxDb" id="10116-ENSRNOP00000028237"/>
<dbReference type="Ensembl" id="ENSRNOT00000028237.5">
    <property type="protein sequence ID" value="ENSRNOP00000028237.2"/>
    <property type="gene ID" value="ENSRNOG00000020817.6"/>
</dbReference>
<dbReference type="GeneID" id="24894"/>
<dbReference type="KEGG" id="rno:24894"/>
<dbReference type="UCSC" id="RGD:2463">
    <property type="organism name" value="rat"/>
</dbReference>
<dbReference type="AGR" id="RGD:2463"/>
<dbReference type="CTD" id="24894"/>
<dbReference type="RGD" id="2463">
    <property type="gene designation" value="Cyp2a1"/>
</dbReference>
<dbReference type="eggNOG" id="KOG0156">
    <property type="taxonomic scope" value="Eukaryota"/>
</dbReference>
<dbReference type="GeneTree" id="ENSGT00940000154117"/>
<dbReference type="InParanoid" id="P11711"/>
<dbReference type="OMA" id="QLYEIFY"/>
<dbReference type="OrthoDB" id="2789670at2759"/>
<dbReference type="PhylomeDB" id="P11711"/>
<dbReference type="TreeFam" id="TF352043"/>
<dbReference type="Reactome" id="R-RNO-211935">
    <property type="pathway name" value="Fatty acids"/>
</dbReference>
<dbReference type="Reactome" id="R-RNO-211981">
    <property type="pathway name" value="Xenobiotics"/>
</dbReference>
<dbReference type="Reactome" id="R-RNO-211999">
    <property type="pathway name" value="CYP2E1 reactions"/>
</dbReference>
<dbReference type="PRO" id="PR:P11711"/>
<dbReference type="Proteomes" id="UP000002494">
    <property type="component" value="Chromosome 1"/>
</dbReference>
<dbReference type="Bgee" id="ENSRNOG00000020817">
    <property type="expression patterns" value="Expressed in liver and 15 other cell types or tissues"/>
</dbReference>
<dbReference type="ExpressionAtlas" id="P11711">
    <property type="expression patterns" value="baseline and differential"/>
</dbReference>
<dbReference type="GO" id="GO:0005737">
    <property type="term" value="C:cytoplasm"/>
    <property type="evidence" value="ECO:0000318"/>
    <property type="project" value="GO_Central"/>
</dbReference>
<dbReference type="GO" id="GO:0005789">
    <property type="term" value="C:endoplasmic reticulum membrane"/>
    <property type="evidence" value="ECO:0007669"/>
    <property type="project" value="UniProtKB-SubCell"/>
</dbReference>
<dbReference type="GO" id="GO:0043231">
    <property type="term" value="C:intracellular membrane-bounded organelle"/>
    <property type="evidence" value="ECO:0000318"/>
    <property type="project" value="GO_Central"/>
</dbReference>
<dbReference type="GO" id="GO:0008392">
    <property type="term" value="F:arachidonate epoxygenase activity"/>
    <property type="evidence" value="ECO:0000318"/>
    <property type="project" value="GO_Central"/>
</dbReference>
<dbReference type="GO" id="GO:0020037">
    <property type="term" value="F:heme binding"/>
    <property type="evidence" value="ECO:0000266"/>
    <property type="project" value="RGD"/>
</dbReference>
<dbReference type="GO" id="GO:0005506">
    <property type="term" value="F:iron ion binding"/>
    <property type="evidence" value="ECO:0007669"/>
    <property type="project" value="InterPro"/>
</dbReference>
<dbReference type="GO" id="GO:0016491">
    <property type="term" value="F:oxidoreductase activity"/>
    <property type="evidence" value="ECO:0000314"/>
    <property type="project" value="RGD"/>
</dbReference>
<dbReference type="GO" id="GO:0016712">
    <property type="term" value="F:oxidoreductase activity, acting on paired donors, with incorporation or reduction of molecular oxygen, reduced flavin or flavoprotein as one donor, and incorporation of one atom of oxygen"/>
    <property type="evidence" value="ECO:0000318"/>
    <property type="project" value="GO_Central"/>
</dbReference>
<dbReference type="GO" id="GO:0008395">
    <property type="term" value="F:steroid hydroxylase activity"/>
    <property type="evidence" value="ECO:0000314"/>
    <property type="project" value="RGD"/>
</dbReference>
<dbReference type="GO" id="GO:0009804">
    <property type="term" value="P:coumarin metabolic process"/>
    <property type="evidence" value="ECO:0000314"/>
    <property type="project" value="RGD"/>
</dbReference>
<dbReference type="GO" id="GO:0019373">
    <property type="term" value="P:epoxygenase P450 pathway"/>
    <property type="evidence" value="ECO:0000318"/>
    <property type="project" value="GO_Central"/>
</dbReference>
<dbReference type="GO" id="GO:0006805">
    <property type="term" value="P:xenobiotic metabolic process"/>
    <property type="evidence" value="ECO:0000318"/>
    <property type="project" value="GO_Central"/>
</dbReference>
<dbReference type="CDD" id="cd20668">
    <property type="entry name" value="CYP2A"/>
    <property type="match status" value="1"/>
</dbReference>
<dbReference type="FunFam" id="1.10.630.10:FF:000238">
    <property type="entry name" value="Cytochrome P450 2A6"/>
    <property type="match status" value="1"/>
</dbReference>
<dbReference type="Gene3D" id="1.10.630.10">
    <property type="entry name" value="Cytochrome P450"/>
    <property type="match status" value="1"/>
</dbReference>
<dbReference type="InterPro" id="IPR001128">
    <property type="entry name" value="Cyt_P450"/>
</dbReference>
<dbReference type="InterPro" id="IPR017972">
    <property type="entry name" value="Cyt_P450_CS"/>
</dbReference>
<dbReference type="InterPro" id="IPR002401">
    <property type="entry name" value="Cyt_P450_E_grp-I"/>
</dbReference>
<dbReference type="InterPro" id="IPR008067">
    <property type="entry name" value="Cyt_P450_E_grp-I_CYP2A-like"/>
</dbReference>
<dbReference type="InterPro" id="IPR036396">
    <property type="entry name" value="Cyt_P450_sf"/>
</dbReference>
<dbReference type="InterPro" id="IPR050182">
    <property type="entry name" value="Cytochrome_P450_fam2"/>
</dbReference>
<dbReference type="PANTHER" id="PTHR24300">
    <property type="entry name" value="CYTOCHROME P450 508A4-RELATED"/>
    <property type="match status" value="1"/>
</dbReference>
<dbReference type="PANTHER" id="PTHR24300:SF103">
    <property type="entry name" value="CYTOCHROME P450-RELATED"/>
    <property type="match status" value="1"/>
</dbReference>
<dbReference type="Pfam" id="PF00067">
    <property type="entry name" value="p450"/>
    <property type="match status" value="1"/>
</dbReference>
<dbReference type="PRINTS" id="PR00463">
    <property type="entry name" value="EP450I"/>
</dbReference>
<dbReference type="PRINTS" id="PR01684">
    <property type="entry name" value="EP450ICYP2A"/>
</dbReference>
<dbReference type="PRINTS" id="PR00385">
    <property type="entry name" value="P450"/>
</dbReference>
<dbReference type="SUPFAM" id="SSF48264">
    <property type="entry name" value="Cytochrome P450"/>
    <property type="match status" value="1"/>
</dbReference>
<dbReference type="PROSITE" id="PS00086">
    <property type="entry name" value="CYTOCHROME_P450"/>
    <property type="match status" value="1"/>
</dbReference>
<keyword id="KW-0903">Direct protein sequencing</keyword>
<keyword id="KW-0256">Endoplasmic reticulum</keyword>
<keyword id="KW-0349">Heme</keyword>
<keyword id="KW-0408">Iron</keyword>
<keyword id="KW-0472">Membrane</keyword>
<keyword id="KW-0479">Metal-binding</keyword>
<keyword id="KW-0492">Microsome</keyword>
<keyword id="KW-0503">Monooxygenase</keyword>
<keyword id="KW-0560">Oxidoreductase</keyword>
<keyword id="KW-0597">Phosphoprotein</keyword>
<keyword id="KW-1185">Reference proteome</keyword>
<gene>
    <name type="primary">Cyp2a1</name>
    <name type="synonym">Cyp2a-1</name>
</gene>
<evidence type="ECO:0000250" key="1"/>
<evidence type="ECO:0000305" key="2"/>
<evidence type="ECO:0007744" key="3">
    <source>
    </source>
</evidence>
<reference key="1">
    <citation type="journal article" date="1987" name="J. Biol. Chem.">
        <title>Rat testosterone 7 alpha-hydroxylase. Isolation, sequence, and expression of cDNA and its developmental regulation and induction by 3-methylcholanthrene.</title>
        <authorList>
            <person name="Nagata K."/>
            <person name="Matsunaga T."/>
            <person name="Gillette J."/>
            <person name="Gelboin H.V."/>
            <person name="Gonzalez F.J."/>
        </authorList>
    </citation>
    <scope>NUCLEOTIDE SEQUENCE [MRNA]</scope>
    <source>
        <tissue>Liver</tissue>
    </source>
</reference>
<reference key="2">
    <citation type="journal article" date="1990" name="Biochemistry">
        <title>Structure and in vitro transcription of the rat CYP2A1 and CYP2A2 genes and regional localization of the CYP2A gene subfamily on mouse chromosome 7.</title>
        <authorList>
            <person name="Matsunaga T."/>
            <person name="Nomoto M."/>
            <person name="Kozak C.A."/>
            <person name="Gonzalez F.J."/>
        </authorList>
    </citation>
    <scope>NUCLEOTIDE SEQUENCE [GENOMIC DNA]</scope>
</reference>
<reference key="3">
    <citation type="journal article" date="2004" name="Genome Res.">
        <title>The status, quality, and expansion of the NIH full-length cDNA project: the Mammalian Gene Collection (MGC).</title>
        <authorList>
            <consortium name="The MGC Project Team"/>
        </authorList>
    </citation>
    <scope>NUCLEOTIDE SEQUENCE [LARGE SCALE MRNA]</scope>
    <source>
        <tissue>Testis</tissue>
    </source>
</reference>
<reference key="4">
    <citation type="journal article" date="1989" name="Arch. Biochem. Biophys.">
        <title>Purification of two isozymes of rat liver microsomal cytochrome P450 with testosterone 7 alpha-hydroxylase activity.</title>
        <authorList>
            <person name="Arlotto M.P."/>
            <person name="Greenway D.J."/>
            <person name="Parkinson A."/>
        </authorList>
    </citation>
    <scope>PROTEIN SEQUENCE OF 1-20</scope>
    <source>
        <tissue>Liver</tissue>
    </source>
</reference>
<reference key="5">
    <citation type="journal article" date="1987" name="J. Biochem.">
        <title>Purification and characterization of six cytochromes P-450 from hepatic microsomes of immature female rats.</title>
        <authorList>
            <person name="Imaoka S."/>
            <person name="Kamataki T."/>
            <person name="Funae Y."/>
        </authorList>
    </citation>
    <scope>PROTEIN SEQUENCE OF 1-12</scope>
    <source>
        <tissue>Liver</tissue>
    </source>
</reference>
<reference key="6">
    <citation type="journal article" date="2012" name="Nat. Commun.">
        <title>Quantitative maps of protein phosphorylation sites across 14 different rat organs and tissues.</title>
        <authorList>
            <person name="Lundby A."/>
            <person name="Secher A."/>
            <person name="Lage K."/>
            <person name="Nordsborg N.B."/>
            <person name="Dmytriyev A."/>
            <person name="Lundby C."/>
            <person name="Olsen J.V."/>
        </authorList>
    </citation>
    <scope>PHOSPHORYLATION [LARGE SCALE ANALYSIS] AT SER-130</scope>
    <scope>IDENTIFICATION BY MASS SPECTROMETRY [LARGE SCALE ANALYSIS]</scope>
</reference>
<proteinExistence type="evidence at protein level"/>
<name>CP2A1_RAT</name>
<protein>
    <recommendedName>
        <fullName>Cytochrome P450 2A1</fullName>
        <ecNumber>1.14.14.1</ecNumber>
    </recommendedName>
    <alternativeName>
        <fullName>CYPIIA1</fullName>
    </alternativeName>
    <alternativeName>
        <fullName>Cytochrome P450-UT-F</fullName>
    </alternativeName>
    <alternativeName>
        <fullName>Steroid hormones 7-alpha-hydroxylase</fullName>
    </alternativeName>
    <alternativeName>
        <fullName>Testosterone 7-alpha-hydroxylase</fullName>
    </alternativeName>
</protein>
<accession>P11711</accession>
<accession>Q642C5</accession>
<feature type="chain" id="PRO_0000051663" description="Cytochrome P450 2A1">
    <location>
        <begin position="1"/>
        <end position="492"/>
    </location>
</feature>
<feature type="binding site" description="axial binding residue">
    <location>
        <position position="437"/>
    </location>
    <ligand>
        <name>heme</name>
        <dbReference type="ChEBI" id="CHEBI:30413"/>
    </ligand>
    <ligandPart>
        <name>Fe</name>
        <dbReference type="ChEBI" id="CHEBI:18248"/>
    </ligandPart>
</feature>
<feature type="modified residue" description="Phosphoserine" evidence="3">
    <location>
        <position position="130"/>
    </location>
</feature>
<feature type="sequence conflict" description="In Ref. 1; AAA41030." evidence="2" ref="1">
    <original>G</original>
    <variation>A</variation>
    <location>
        <position position="386"/>
    </location>
</feature>
<comment type="function">
    <text>Highly active in the 7-alpha-hydroxylation of testosterone, progesterone and androstenedione.</text>
</comment>
<comment type="catalytic activity">
    <reaction>
        <text>an organic molecule + reduced [NADPH--hemoprotein reductase] + O2 = an alcohol + oxidized [NADPH--hemoprotein reductase] + H2O + H(+)</text>
        <dbReference type="Rhea" id="RHEA:17149"/>
        <dbReference type="Rhea" id="RHEA-COMP:11964"/>
        <dbReference type="Rhea" id="RHEA-COMP:11965"/>
        <dbReference type="ChEBI" id="CHEBI:15377"/>
        <dbReference type="ChEBI" id="CHEBI:15378"/>
        <dbReference type="ChEBI" id="CHEBI:15379"/>
        <dbReference type="ChEBI" id="CHEBI:30879"/>
        <dbReference type="ChEBI" id="CHEBI:57618"/>
        <dbReference type="ChEBI" id="CHEBI:58210"/>
        <dbReference type="ChEBI" id="CHEBI:142491"/>
        <dbReference type="EC" id="1.14.14.1"/>
    </reaction>
</comment>
<comment type="cofactor">
    <cofactor evidence="1">
        <name>heme</name>
        <dbReference type="ChEBI" id="CHEBI:30413"/>
    </cofactor>
</comment>
<comment type="subcellular location">
    <subcellularLocation>
        <location>Endoplasmic reticulum membrane</location>
        <topology>Peripheral membrane protein</topology>
    </subcellularLocation>
    <subcellularLocation>
        <location>Microsome membrane</location>
        <topology>Peripheral membrane protein</topology>
    </subcellularLocation>
</comment>
<comment type="tissue specificity">
    <text>Liver and testis.</text>
</comment>
<comment type="induction">
    <text>By 3-methylcholanthrene (3MC).</text>
</comment>
<comment type="similarity">
    <text evidence="2">Belongs to the cytochrome P450 family.</text>
</comment>
<sequence length="492" mass="55995">MLDTGLLLVVILASLSVMLLVSLWQQKIRGRLPPGPTPLPFIGNYLQLNTKDVYSSITQLSERYGPVFTIHLGPRRVVVLYGYDAVKEALVDQAEEFSGRGEQATYNTLFKGYGVAFSSGERAKQLRRLSIATLRDFGVGKRGVEERILEEAGYLIKMLQGTCGAPIDPTIYLSKTVSNVISSIVFGERFDYEDTEFLSLLQMMGQMNRFAASPTGQLYDMFHSVMKYLPGPQQQIIKVTQKLEDFMIEKVRQNHSTLDPNSPRNFIDSFLIRMQEEKNGNSEFHMKNLVMTTLSLFFAGSETVSSTLRYGFLLLMKHPDVEAKVHEEIEQVIGRNRQPQYEDHMKMPYTQAVINEIQRFSNLAPLGIPRRIIKNTTFRGFFLPKGTDVFPILGSLMTDPKFFPSPKDFDPQNFLDDKGQLKKNAAFLPFSTGKRFCLGDGLAKMELFLLLTTILQNFRFKFPMKLEDINESPKPLGFTRIIPKYTMSFMPI</sequence>